<organism>
    <name type="scientific">Lactococcus lactis subsp. cremoris (strain SK11)</name>
    <dbReference type="NCBI Taxonomy" id="272622"/>
    <lineage>
        <taxon>Bacteria</taxon>
        <taxon>Bacillati</taxon>
        <taxon>Bacillota</taxon>
        <taxon>Bacilli</taxon>
        <taxon>Lactobacillales</taxon>
        <taxon>Streptococcaceae</taxon>
        <taxon>Lactococcus</taxon>
        <taxon>Lactococcus cremoris subsp. cremoris</taxon>
    </lineage>
</organism>
<keyword id="KW-0067">ATP-binding</keyword>
<keyword id="KW-0963">Cytoplasm</keyword>
<keyword id="KW-0418">Kinase</keyword>
<keyword id="KW-0520">NAD</keyword>
<keyword id="KW-0521">NADP</keyword>
<keyword id="KW-0547">Nucleotide-binding</keyword>
<keyword id="KW-0808">Transferase</keyword>
<name>NADK_LACLS</name>
<protein>
    <recommendedName>
        <fullName evidence="1">NAD kinase</fullName>
        <ecNumber evidence="1">2.7.1.23</ecNumber>
    </recommendedName>
    <alternativeName>
        <fullName evidence="1">ATP-dependent NAD kinase</fullName>
    </alternativeName>
</protein>
<reference key="1">
    <citation type="journal article" date="2006" name="Proc. Natl. Acad. Sci. U.S.A.">
        <title>Comparative genomics of the lactic acid bacteria.</title>
        <authorList>
            <person name="Makarova K.S."/>
            <person name="Slesarev A."/>
            <person name="Wolf Y.I."/>
            <person name="Sorokin A."/>
            <person name="Mirkin B."/>
            <person name="Koonin E.V."/>
            <person name="Pavlov A."/>
            <person name="Pavlova N."/>
            <person name="Karamychev V."/>
            <person name="Polouchine N."/>
            <person name="Shakhova V."/>
            <person name="Grigoriev I."/>
            <person name="Lou Y."/>
            <person name="Rohksar D."/>
            <person name="Lucas S."/>
            <person name="Huang K."/>
            <person name="Goodstein D.M."/>
            <person name="Hawkins T."/>
            <person name="Plengvidhya V."/>
            <person name="Welker D."/>
            <person name="Hughes J."/>
            <person name="Goh Y."/>
            <person name="Benson A."/>
            <person name="Baldwin K."/>
            <person name="Lee J.-H."/>
            <person name="Diaz-Muniz I."/>
            <person name="Dosti B."/>
            <person name="Smeianov V."/>
            <person name="Wechter W."/>
            <person name="Barabote R."/>
            <person name="Lorca G."/>
            <person name="Altermann E."/>
            <person name="Barrangou R."/>
            <person name="Ganesan B."/>
            <person name="Xie Y."/>
            <person name="Rawsthorne H."/>
            <person name="Tamir D."/>
            <person name="Parker C."/>
            <person name="Breidt F."/>
            <person name="Broadbent J.R."/>
            <person name="Hutkins R."/>
            <person name="O'Sullivan D."/>
            <person name="Steele J."/>
            <person name="Unlu G."/>
            <person name="Saier M.H. Jr."/>
            <person name="Klaenhammer T."/>
            <person name="Richardson P."/>
            <person name="Kozyavkin S."/>
            <person name="Weimer B.C."/>
            <person name="Mills D.A."/>
        </authorList>
    </citation>
    <scope>NUCLEOTIDE SEQUENCE [LARGE SCALE GENOMIC DNA]</scope>
    <source>
        <strain>SK11</strain>
    </source>
</reference>
<proteinExistence type="inferred from homology"/>
<evidence type="ECO:0000255" key="1">
    <source>
        <dbReference type="HAMAP-Rule" id="MF_00361"/>
    </source>
</evidence>
<gene>
    <name evidence="1" type="primary">nadK</name>
    <name type="ordered locus">LACR_0409</name>
</gene>
<feature type="chain" id="PRO_1000005419" description="NAD kinase">
    <location>
        <begin position="1"/>
        <end position="270"/>
    </location>
</feature>
<feature type="active site" description="Proton acceptor" evidence="1">
    <location>
        <position position="49"/>
    </location>
</feature>
<feature type="binding site" evidence="1">
    <location>
        <begin position="49"/>
        <end position="50"/>
    </location>
    <ligand>
        <name>NAD(+)</name>
        <dbReference type="ChEBI" id="CHEBI:57540"/>
    </ligand>
</feature>
<feature type="binding site" evidence="1">
    <location>
        <position position="54"/>
    </location>
    <ligand>
        <name>NAD(+)</name>
        <dbReference type="ChEBI" id="CHEBI:57540"/>
    </ligand>
</feature>
<feature type="binding site" evidence="1">
    <location>
        <begin position="126"/>
        <end position="127"/>
    </location>
    <ligand>
        <name>NAD(+)</name>
        <dbReference type="ChEBI" id="CHEBI:57540"/>
    </ligand>
</feature>
<feature type="binding site" evidence="1">
    <location>
        <position position="152"/>
    </location>
    <ligand>
        <name>NAD(+)</name>
        <dbReference type="ChEBI" id="CHEBI:57540"/>
    </ligand>
</feature>
<feature type="binding site" evidence="1">
    <location>
        <position position="154"/>
    </location>
    <ligand>
        <name>NAD(+)</name>
        <dbReference type="ChEBI" id="CHEBI:57540"/>
    </ligand>
</feature>
<feature type="binding site" evidence="1">
    <location>
        <begin position="165"/>
        <end position="170"/>
    </location>
    <ligand>
        <name>NAD(+)</name>
        <dbReference type="ChEBI" id="CHEBI:57540"/>
    </ligand>
</feature>
<feature type="binding site" evidence="1">
    <location>
        <position position="189"/>
    </location>
    <ligand>
        <name>NAD(+)</name>
        <dbReference type="ChEBI" id="CHEBI:57540"/>
    </ligand>
</feature>
<feature type="binding site" evidence="1">
    <location>
        <position position="227"/>
    </location>
    <ligand>
        <name>NAD(+)</name>
        <dbReference type="ChEBI" id="CHEBI:57540"/>
    </ligand>
</feature>
<dbReference type="EC" id="2.7.1.23" evidence="1"/>
<dbReference type="EMBL" id="CP000425">
    <property type="protein sequence ID" value="ABJ72016.1"/>
    <property type="molecule type" value="Genomic_DNA"/>
</dbReference>
<dbReference type="RefSeq" id="WP_011675422.1">
    <property type="nucleotide sequence ID" value="NC_008527.1"/>
</dbReference>
<dbReference type="SMR" id="Q031V6"/>
<dbReference type="KEGG" id="llc:LACR_0409"/>
<dbReference type="HOGENOM" id="CLU_008831_0_3_9"/>
<dbReference type="Proteomes" id="UP000000240">
    <property type="component" value="Chromosome"/>
</dbReference>
<dbReference type="GO" id="GO:0005737">
    <property type="term" value="C:cytoplasm"/>
    <property type="evidence" value="ECO:0007669"/>
    <property type="project" value="UniProtKB-SubCell"/>
</dbReference>
<dbReference type="GO" id="GO:0005524">
    <property type="term" value="F:ATP binding"/>
    <property type="evidence" value="ECO:0007669"/>
    <property type="project" value="UniProtKB-KW"/>
</dbReference>
<dbReference type="GO" id="GO:0046872">
    <property type="term" value="F:metal ion binding"/>
    <property type="evidence" value="ECO:0007669"/>
    <property type="project" value="UniProtKB-UniRule"/>
</dbReference>
<dbReference type="GO" id="GO:0051287">
    <property type="term" value="F:NAD binding"/>
    <property type="evidence" value="ECO:0007669"/>
    <property type="project" value="UniProtKB-ARBA"/>
</dbReference>
<dbReference type="GO" id="GO:0003951">
    <property type="term" value="F:NAD+ kinase activity"/>
    <property type="evidence" value="ECO:0007669"/>
    <property type="project" value="UniProtKB-UniRule"/>
</dbReference>
<dbReference type="GO" id="GO:0019674">
    <property type="term" value="P:NAD metabolic process"/>
    <property type="evidence" value="ECO:0007669"/>
    <property type="project" value="InterPro"/>
</dbReference>
<dbReference type="GO" id="GO:0006741">
    <property type="term" value="P:NADP biosynthetic process"/>
    <property type="evidence" value="ECO:0007669"/>
    <property type="project" value="UniProtKB-UniRule"/>
</dbReference>
<dbReference type="Gene3D" id="3.40.50.10330">
    <property type="entry name" value="Probable inorganic polyphosphate/atp-NAD kinase, domain 1"/>
    <property type="match status" value="1"/>
</dbReference>
<dbReference type="Gene3D" id="2.60.200.30">
    <property type="entry name" value="Probable inorganic polyphosphate/atp-NAD kinase, domain 2"/>
    <property type="match status" value="1"/>
</dbReference>
<dbReference type="HAMAP" id="MF_00361">
    <property type="entry name" value="NAD_kinase"/>
    <property type="match status" value="1"/>
</dbReference>
<dbReference type="InterPro" id="IPR017438">
    <property type="entry name" value="ATP-NAD_kinase_N"/>
</dbReference>
<dbReference type="InterPro" id="IPR017437">
    <property type="entry name" value="ATP-NAD_kinase_PpnK-typ_C"/>
</dbReference>
<dbReference type="InterPro" id="IPR016064">
    <property type="entry name" value="NAD/diacylglycerol_kinase_sf"/>
</dbReference>
<dbReference type="InterPro" id="IPR002504">
    <property type="entry name" value="NADK"/>
</dbReference>
<dbReference type="NCBIfam" id="NF003424">
    <property type="entry name" value="PRK04885.1"/>
    <property type="match status" value="1"/>
</dbReference>
<dbReference type="PANTHER" id="PTHR20275">
    <property type="entry name" value="NAD KINASE"/>
    <property type="match status" value="1"/>
</dbReference>
<dbReference type="PANTHER" id="PTHR20275:SF0">
    <property type="entry name" value="NAD KINASE"/>
    <property type="match status" value="1"/>
</dbReference>
<dbReference type="Pfam" id="PF01513">
    <property type="entry name" value="NAD_kinase"/>
    <property type="match status" value="1"/>
</dbReference>
<dbReference type="Pfam" id="PF20143">
    <property type="entry name" value="NAD_kinase_C"/>
    <property type="match status" value="1"/>
</dbReference>
<dbReference type="SUPFAM" id="SSF111331">
    <property type="entry name" value="NAD kinase/diacylglycerol kinase-like"/>
    <property type="match status" value="1"/>
</dbReference>
<sequence length="270" mass="30408">MNFGKKVWLIGNSSEKSKKILNKLSKILKAEHFVFDDINPEIVISVGGDGTLLRAMHMYEYQLDRVRFLGVHTGHLGFYTDFTDEDLFEVVEALYDENPAQAIHYPLIRVQVSFTDGYQIVRHVLNEATIRRASKTMVGDVRISDYLFERFRGDGLSISTPTGSTAYNKSIGGAVVHPRVKAMQIAEIASLNNVVYRTLGSPMIVAEKDTITVCPAPEDDYSLTFDQLTFEYKNIKSIEFSLDGTTISFANCAHTPFWERVSKSFIGEVE</sequence>
<comment type="function">
    <text evidence="1">Involved in the regulation of the intracellular balance of NAD and NADP, and is a key enzyme in the biosynthesis of NADP. Catalyzes specifically the phosphorylation on 2'-hydroxyl of the adenosine moiety of NAD to yield NADP.</text>
</comment>
<comment type="catalytic activity">
    <reaction evidence="1">
        <text>NAD(+) + ATP = ADP + NADP(+) + H(+)</text>
        <dbReference type="Rhea" id="RHEA:18629"/>
        <dbReference type="ChEBI" id="CHEBI:15378"/>
        <dbReference type="ChEBI" id="CHEBI:30616"/>
        <dbReference type="ChEBI" id="CHEBI:57540"/>
        <dbReference type="ChEBI" id="CHEBI:58349"/>
        <dbReference type="ChEBI" id="CHEBI:456216"/>
        <dbReference type="EC" id="2.7.1.23"/>
    </reaction>
</comment>
<comment type="cofactor">
    <cofactor evidence="1">
        <name>a divalent metal cation</name>
        <dbReference type="ChEBI" id="CHEBI:60240"/>
    </cofactor>
</comment>
<comment type="subcellular location">
    <subcellularLocation>
        <location evidence="1">Cytoplasm</location>
    </subcellularLocation>
</comment>
<comment type="similarity">
    <text evidence="1">Belongs to the NAD kinase family.</text>
</comment>
<accession>Q031V6</accession>